<organism evidence="3">
    <name type="scientific">Arabidopsis thaliana</name>
    <name type="common">Mouse-ear cress</name>
    <dbReference type="NCBI Taxonomy" id="3702"/>
    <lineage>
        <taxon>Eukaryota</taxon>
        <taxon>Viridiplantae</taxon>
        <taxon>Streptophyta</taxon>
        <taxon>Embryophyta</taxon>
        <taxon>Tracheophyta</taxon>
        <taxon>Spermatophyta</taxon>
        <taxon>Magnoliopsida</taxon>
        <taxon>eudicotyledons</taxon>
        <taxon>Gunneridae</taxon>
        <taxon>Pentapetalae</taxon>
        <taxon>rosids</taxon>
        <taxon>malvids</taxon>
        <taxon>Brassicales</taxon>
        <taxon>Brassicaceae</taxon>
        <taxon>Camelineae</taxon>
        <taxon>Arabidopsis</taxon>
    </lineage>
</organism>
<protein>
    <recommendedName>
        <fullName>Putative defensin-like protein 148</fullName>
    </recommendedName>
    <alternativeName>
        <fullName>Putative low-molecular-weight cysteine-rich protein 4</fullName>
        <shortName>Protein LCR4</shortName>
    </alternativeName>
</protein>
<proteinExistence type="inferred from homology"/>
<name>DF148_ARATH</name>
<keyword id="KW-0929">Antimicrobial</keyword>
<keyword id="KW-1015">Disulfide bond</keyword>
<keyword id="KW-0295">Fungicide</keyword>
<keyword id="KW-0611">Plant defense</keyword>
<keyword id="KW-1185">Reference proteome</keyword>
<keyword id="KW-0964">Secreted</keyword>
<keyword id="KW-0732">Signal</keyword>
<evidence type="ECO:0000250" key="1"/>
<evidence type="ECO:0000255" key="2"/>
<evidence type="ECO:0000305" key="3"/>
<accession>P82719</accession>
<reference evidence="3" key="1">
    <citation type="journal article" date="2000" name="DNA Res.">
        <title>Structural analysis of Arabidopsis thaliana chromosome 3. I. Sequence features of the regions of 4,504,864 bp covered by sixty P1 and TAC clones.</title>
        <authorList>
            <person name="Sato S."/>
            <person name="Nakamura Y."/>
            <person name="Kaneko T."/>
            <person name="Katoh T."/>
            <person name="Asamizu E."/>
            <person name="Tabata S."/>
        </authorList>
    </citation>
    <scope>NUCLEOTIDE SEQUENCE [LARGE SCALE GENOMIC DNA]</scope>
    <source>
        <strain>cv. Columbia</strain>
    </source>
</reference>
<reference key="2">
    <citation type="journal article" date="2017" name="Plant J.">
        <title>Araport11: a complete reannotation of the Arabidopsis thaliana reference genome.</title>
        <authorList>
            <person name="Cheng C.Y."/>
            <person name="Krishnakumar V."/>
            <person name="Chan A.P."/>
            <person name="Thibaud-Nissen F."/>
            <person name="Schobel S."/>
            <person name="Town C.D."/>
        </authorList>
    </citation>
    <scope>GENOME REANNOTATION</scope>
    <source>
        <strain>cv. Columbia</strain>
    </source>
</reference>
<reference evidence="3" key="3">
    <citation type="journal article" date="2001" name="Plant Mol. Biol.">
        <title>Two large Arabidopsis thaliana gene families are homologous to the Brassica gene superfamily that encodes pollen coat proteins and the male component of the self-incompatibility response.</title>
        <authorList>
            <person name="Vanoosthuyse V."/>
            <person name="Miege C."/>
            <person name="Dumas C."/>
            <person name="Cock J.M."/>
        </authorList>
    </citation>
    <scope>IDENTIFICATION</scope>
</reference>
<reference key="4">
    <citation type="journal article" date="2005" name="Plant Physiol.">
        <title>Genome organization of more than 300 defensin-like genes in Arabidopsis.</title>
        <authorList>
            <person name="Silverstein K.A.T."/>
            <person name="Graham M.A."/>
            <person name="Paape T.D."/>
            <person name="VandenBosch K.A."/>
        </authorList>
    </citation>
    <scope>GENE FAMILY</scope>
</reference>
<sequence length="81" mass="9228">MIKSFQLSFTVLIVFTVLILGVVGNVEQKSQDWCWSIVNKDRCLQKECESLCSKKHPKGKFMCIPSTPGGPFQCHCRHPCR</sequence>
<feature type="signal peptide" evidence="2">
    <location>
        <begin position="1"/>
        <end position="24"/>
    </location>
</feature>
<feature type="chain" id="PRO_0000017247" description="Putative defensin-like protein 148">
    <location>
        <begin position="25"/>
        <end position="81"/>
    </location>
</feature>
<feature type="disulfide bond" evidence="1">
    <location>
        <begin position="34"/>
        <end position="80"/>
    </location>
</feature>
<feature type="disulfide bond" evidence="1">
    <location>
        <begin position="43"/>
        <end position="63"/>
    </location>
</feature>
<feature type="disulfide bond" evidence="1">
    <location>
        <begin position="48"/>
        <end position="74"/>
    </location>
</feature>
<feature type="disulfide bond" evidence="1">
    <location>
        <begin position="52"/>
        <end position="76"/>
    </location>
</feature>
<gene>
    <name type="primary">LCR4</name>
    <name type="ordered locus">At3g25265</name>
    <name type="ORF">MJL12</name>
</gene>
<dbReference type="EMBL" id="AB026647">
    <property type="status" value="NOT_ANNOTATED_CDS"/>
    <property type="molecule type" value="Genomic_DNA"/>
</dbReference>
<dbReference type="EMBL" id="CP002686">
    <property type="protein sequence ID" value="AEE77002.1"/>
    <property type="molecule type" value="Genomic_DNA"/>
</dbReference>
<dbReference type="RefSeq" id="NP_001030763.1">
    <property type="nucleotide sequence ID" value="NM_001035686.2"/>
</dbReference>
<dbReference type="STRING" id="3702.P82719"/>
<dbReference type="GlyGen" id="P82719">
    <property type="glycosylation" value="1 site"/>
</dbReference>
<dbReference type="PaxDb" id="3702-AT3G25265.1"/>
<dbReference type="ProteomicsDB" id="224228"/>
<dbReference type="EnsemblPlants" id="AT3G25265.1">
    <property type="protein sequence ID" value="AT3G25265.1"/>
    <property type="gene ID" value="AT3G25265"/>
</dbReference>
<dbReference type="GeneID" id="3768928"/>
<dbReference type="Gramene" id="AT3G25265.1">
    <property type="protein sequence ID" value="AT3G25265.1"/>
    <property type="gene ID" value="AT3G25265"/>
</dbReference>
<dbReference type="KEGG" id="ath:AT3G25265"/>
<dbReference type="Araport" id="AT3G25265"/>
<dbReference type="TAIR" id="AT3G25265">
    <property type="gene designation" value="LCR4"/>
</dbReference>
<dbReference type="HOGENOM" id="CLU_182511_0_0_1"/>
<dbReference type="InParanoid" id="P82719"/>
<dbReference type="OMA" id="RCLQKEC"/>
<dbReference type="OrthoDB" id="1020815at2759"/>
<dbReference type="PhylomeDB" id="P82719"/>
<dbReference type="PRO" id="PR:P82719"/>
<dbReference type="Proteomes" id="UP000006548">
    <property type="component" value="Chromosome 3"/>
</dbReference>
<dbReference type="ExpressionAtlas" id="P82719">
    <property type="expression patterns" value="baseline"/>
</dbReference>
<dbReference type="GO" id="GO:0005576">
    <property type="term" value="C:extracellular region"/>
    <property type="evidence" value="ECO:0007669"/>
    <property type="project" value="UniProtKB-SubCell"/>
</dbReference>
<dbReference type="GO" id="GO:0050832">
    <property type="term" value="P:defense response to fungus"/>
    <property type="evidence" value="ECO:0007669"/>
    <property type="project" value="UniProtKB-KW"/>
</dbReference>
<dbReference type="GO" id="GO:0031640">
    <property type="term" value="P:killing of cells of another organism"/>
    <property type="evidence" value="ECO:0007669"/>
    <property type="project" value="UniProtKB-KW"/>
</dbReference>
<dbReference type="InterPro" id="IPR010851">
    <property type="entry name" value="DEFL"/>
</dbReference>
<dbReference type="PANTHER" id="PTHR34783">
    <property type="entry name" value="DEFENSIN-LIKE PROTEIN 144-RELATED"/>
    <property type="match status" value="1"/>
</dbReference>
<dbReference type="PANTHER" id="PTHR34783:SF1">
    <property type="entry name" value="DEFENSIN-LIKE PROTEIN 144-RELATED"/>
    <property type="match status" value="1"/>
</dbReference>
<dbReference type="Pfam" id="PF07333">
    <property type="entry name" value="SLR1-BP"/>
    <property type="match status" value="1"/>
</dbReference>
<comment type="subcellular location">
    <subcellularLocation>
        <location evidence="1">Secreted</location>
    </subcellularLocation>
</comment>
<comment type="similarity">
    <text evidence="3">Belongs to the DEFL family.</text>
</comment>